<reference key="1">
    <citation type="journal article" date="2003" name="Nucleic Acids Res.">
        <title>What's in the genome of a filamentous fungus? Analysis of the Neurospora genome sequence.</title>
        <authorList>
            <person name="Mannhaupt G."/>
            <person name="Montrone C."/>
            <person name="Haase D."/>
            <person name="Mewes H.-W."/>
            <person name="Aign V."/>
            <person name="Hoheisel J.D."/>
            <person name="Fartmann B."/>
            <person name="Nyakatura G."/>
            <person name="Kempken F."/>
            <person name="Maier J."/>
            <person name="Schulte U."/>
        </authorList>
    </citation>
    <scope>NUCLEOTIDE SEQUENCE [LARGE SCALE GENOMIC DNA]</scope>
    <source>
        <strain>ATCC 24698 / 74-OR23-1A / CBS 708.71 / DSM 1257 / FGSC 987</strain>
    </source>
</reference>
<reference key="2">
    <citation type="journal article" date="2003" name="Nature">
        <title>The genome sequence of the filamentous fungus Neurospora crassa.</title>
        <authorList>
            <person name="Galagan J.E."/>
            <person name="Calvo S.E."/>
            <person name="Borkovich K.A."/>
            <person name="Selker E.U."/>
            <person name="Read N.D."/>
            <person name="Jaffe D.B."/>
            <person name="FitzHugh W."/>
            <person name="Ma L.-J."/>
            <person name="Smirnov S."/>
            <person name="Purcell S."/>
            <person name="Rehman B."/>
            <person name="Elkins T."/>
            <person name="Engels R."/>
            <person name="Wang S."/>
            <person name="Nielsen C.B."/>
            <person name="Butler J."/>
            <person name="Endrizzi M."/>
            <person name="Qui D."/>
            <person name="Ianakiev P."/>
            <person name="Bell-Pedersen D."/>
            <person name="Nelson M.A."/>
            <person name="Werner-Washburne M."/>
            <person name="Selitrennikoff C.P."/>
            <person name="Kinsey J.A."/>
            <person name="Braun E.L."/>
            <person name="Zelter A."/>
            <person name="Schulte U."/>
            <person name="Kothe G.O."/>
            <person name="Jedd G."/>
            <person name="Mewes H.-W."/>
            <person name="Staben C."/>
            <person name="Marcotte E."/>
            <person name="Greenberg D."/>
            <person name="Roy A."/>
            <person name="Foley K."/>
            <person name="Naylor J."/>
            <person name="Stange-Thomann N."/>
            <person name="Barrett R."/>
            <person name="Gnerre S."/>
            <person name="Kamal M."/>
            <person name="Kamvysselis M."/>
            <person name="Mauceli E.W."/>
            <person name="Bielke C."/>
            <person name="Rudd S."/>
            <person name="Frishman D."/>
            <person name="Krystofova S."/>
            <person name="Rasmussen C."/>
            <person name="Metzenberg R.L."/>
            <person name="Perkins D.D."/>
            <person name="Kroken S."/>
            <person name="Cogoni C."/>
            <person name="Macino G."/>
            <person name="Catcheside D.E.A."/>
            <person name="Li W."/>
            <person name="Pratt R.J."/>
            <person name="Osmani S.A."/>
            <person name="DeSouza C.P.C."/>
            <person name="Glass N.L."/>
            <person name="Orbach M.J."/>
            <person name="Berglund J.A."/>
            <person name="Voelker R."/>
            <person name="Yarden O."/>
            <person name="Plamann M."/>
            <person name="Seiler S."/>
            <person name="Dunlap J.C."/>
            <person name="Radford A."/>
            <person name="Aramayo R."/>
            <person name="Natvig D.O."/>
            <person name="Alex L.A."/>
            <person name="Mannhaupt G."/>
            <person name="Ebbole D.J."/>
            <person name="Freitag M."/>
            <person name="Paulsen I."/>
            <person name="Sachs M.S."/>
            <person name="Lander E.S."/>
            <person name="Nusbaum C."/>
            <person name="Birren B.W."/>
        </authorList>
    </citation>
    <scope>NUCLEOTIDE SEQUENCE [LARGE SCALE GENOMIC DNA]</scope>
    <source>
        <strain>ATCC 24698 / 74-OR23-1A / CBS 708.71 / DSM 1257 / FGSC 987</strain>
    </source>
</reference>
<evidence type="ECO:0000250" key="1">
    <source>
        <dbReference type="UniProtKB" id="P53115"/>
    </source>
</evidence>
<evidence type="ECO:0000250" key="2">
    <source>
        <dbReference type="UniProtKB" id="Q9ULG1"/>
    </source>
</evidence>
<evidence type="ECO:0000255" key="3"/>
<evidence type="ECO:0000255" key="4">
    <source>
        <dbReference type="PROSITE-ProRule" id="PRU00541"/>
    </source>
</evidence>
<evidence type="ECO:0000255" key="5">
    <source>
        <dbReference type="PROSITE-ProRule" id="PRU00542"/>
    </source>
</evidence>
<evidence type="ECO:0000255" key="6">
    <source>
        <dbReference type="PROSITE-ProRule" id="PRU00746"/>
    </source>
</evidence>
<evidence type="ECO:0000256" key="7">
    <source>
        <dbReference type="SAM" id="MobiDB-lite"/>
    </source>
</evidence>
<evidence type="ECO:0000305" key="8"/>
<dbReference type="EC" id="3.6.4.-" evidence="1"/>
<dbReference type="EMBL" id="BX294010">
    <property type="protein sequence ID" value="CAD70746.1"/>
    <property type="status" value="ALT_SEQ"/>
    <property type="molecule type" value="Genomic_DNA"/>
</dbReference>
<dbReference type="EMBL" id="CM002240">
    <property type="protein sequence ID" value="ESA42365.1"/>
    <property type="molecule type" value="Genomic_DNA"/>
</dbReference>
<dbReference type="RefSeq" id="XP_011394745.1">
    <property type="nucleotide sequence ID" value="XM_011396443.1"/>
</dbReference>
<dbReference type="SMR" id="Q872I5"/>
<dbReference type="STRING" id="367110.Q872I5"/>
<dbReference type="PaxDb" id="5141-EFNCRP00000008850"/>
<dbReference type="EnsemblFungi" id="ESA42365">
    <property type="protein sequence ID" value="ESA42365"/>
    <property type="gene ID" value="NCU08919"/>
</dbReference>
<dbReference type="GeneID" id="3874826"/>
<dbReference type="KEGG" id="ncr:NCU08919"/>
<dbReference type="VEuPathDB" id="FungiDB:NCU08919"/>
<dbReference type="HOGENOM" id="CLU_000315_26_1_1"/>
<dbReference type="InParanoid" id="Q872I5"/>
<dbReference type="OrthoDB" id="372624at2759"/>
<dbReference type="Proteomes" id="UP000001805">
    <property type="component" value="Chromosome 2, Linkage Group V"/>
</dbReference>
<dbReference type="GO" id="GO:0031011">
    <property type="term" value="C:Ino80 complex"/>
    <property type="evidence" value="ECO:0000318"/>
    <property type="project" value="GO_Central"/>
</dbReference>
<dbReference type="GO" id="GO:0005524">
    <property type="term" value="F:ATP binding"/>
    <property type="evidence" value="ECO:0007669"/>
    <property type="project" value="UniProtKB-KW"/>
</dbReference>
<dbReference type="GO" id="GO:0016887">
    <property type="term" value="F:ATP hydrolysis activity"/>
    <property type="evidence" value="ECO:0000318"/>
    <property type="project" value="GO_Central"/>
</dbReference>
<dbReference type="GO" id="GO:0140658">
    <property type="term" value="F:ATP-dependent chromatin remodeler activity"/>
    <property type="evidence" value="ECO:0007669"/>
    <property type="project" value="InterPro"/>
</dbReference>
<dbReference type="GO" id="GO:0003677">
    <property type="term" value="F:DNA binding"/>
    <property type="evidence" value="ECO:0007669"/>
    <property type="project" value="UniProtKB-KW"/>
</dbReference>
<dbReference type="GO" id="GO:0042393">
    <property type="term" value="F:histone binding"/>
    <property type="evidence" value="ECO:0000318"/>
    <property type="project" value="GO_Central"/>
</dbReference>
<dbReference type="GO" id="GO:0006338">
    <property type="term" value="P:chromatin remodeling"/>
    <property type="evidence" value="ECO:0000318"/>
    <property type="project" value="GO_Central"/>
</dbReference>
<dbReference type="GO" id="GO:0006281">
    <property type="term" value="P:DNA repair"/>
    <property type="evidence" value="ECO:0000318"/>
    <property type="project" value="GO_Central"/>
</dbReference>
<dbReference type="GO" id="GO:0006351">
    <property type="term" value="P:DNA-templated transcription"/>
    <property type="evidence" value="ECO:0007669"/>
    <property type="project" value="InterPro"/>
</dbReference>
<dbReference type="GO" id="GO:0060255">
    <property type="term" value="P:regulation of macromolecule metabolic process"/>
    <property type="evidence" value="ECO:0007669"/>
    <property type="project" value="UniProtKB-ARBA"/>
</dbReference>
<dbReference type="CDD" id="cd18002">
    <property type="entry name" value="DEXQc_INO80"/>
    <property type="match status" value="1"/>
</dbReference>
<dbReference type="CDD" id="cd18793">
    <property type="entry name" value="SF2_C_SNF"/>
    <property type="match status" value="1"/>
</dbReference>
<dbReference type="FunFam" id="3.40.50.10810:FF:000006">
    <property type="entry name" value="Putative DNA helicase INO80"/>
    <property type="match status" value="1"/>
</dbReference>
<dbReference type="FunFam" id="3.40.50.300:FF:001269">
    <property type="entry name" value="SNF2 family helicase/ATPase"/>
    <property type="match status" value="1"/>
</dbReference>
<dbReference type="Gene3D" id="3.40.50.300">
    <property type="entry name" value="P-loop containing nucleotide triphosphate hydrolases"/>
    <property type="match status" value="1"/>
</dbReference>
<dbReference type="Gene3D" id="3.40.50.10810">
    <property type="entry name" value="Tandem AAA-ATPase domain"/>
    <property type="match status" value="1"/>
</dbReference>
<dbReference type="InterPro" id="IPR020838">
    <property type="entry name" value="DBINO"/>
</dbReference>
<dbReference type="InterPro" id="IPR031047">
    <property type="entry name" value="DEXQc_INO80"/>
</dbReference>
<dbReference type="InterPro" id="IPR014001">
    <property type="entry name" value="Helicase_ATP-bd"/>
</dbReference>
<dbReference type="InterPro" id="IPR001650">
    <property type="entry name" value="Helicase_C-like"/>
</dbReference>
<dbReference type="InterPro" id="IPR050520">
    <property type="entry name" value="INO80/SWR1_helicase"/>
</dbReference>
<dbReference type="InterPro" id="IPR027417">
    <property type="entry name" value="P-loop_NTPase"/>
</dbReference>
<dbReference type="InterPro" id="IPR038718">
    <property type="entry name" value="SNF2-like_sf"/>
</dbReference>
<dbReference type="InterPro" id="IPR049730">
    <property type="entry name" value="SNF2/RAD54-like_C"/>
</dbReference>
<dbReference type="InterPro" id="IPR000330">
    <property type="entry name" value="SNF2_N"/>
</dbReference>
<dbReference type="PANTHER" id="PTHR45685:SF2">
    <property type="entry name" value="CHROMATIN-REMODELING ATPASE INO80"/>
    <property type="match status" value="1"/>
</dbReference>
<dbReference type="PANTHER" id="PTHR45685">
    <property type="entry name" value="HELICASE SRCAP-RELATED"/>
    <property type="match status" value="1"/>
</dbReference>
<dbReference type="Pfam" id="PF13892">
    <property type="entry name" value="DBINO"/>
    <property type="match status" value="1"/>
</dbReference>
<dbReference type="Pfam" id="PF00271">
    <property type="entry name" value="Helicase_C"/>
    <property type="match status" value="1"/>
</dbReference>
<dbReference type="Pfam" id="PF00176">
    <property type="entry name" value="SNF2-rel_dom"/>
    <property type="match status" value="1"/>
</dbReference>
<dbReference type="SMART" id="SM00487">
    <property type="entry name" value="DEXDc"/>
    <property type="match status" value="1"/>
</dbReference>
<dbReference type="SMART" id="SM00490">
    <property type="entry name" value="HELICc"/>
    <property type="match status" value="1"/>
</dbReference>
<dbReference type="SUPFAM" id="SSF52540">
    <property type="entry name" value="P-loop containing nucleoside triphosphate hydrolases"/>
    <property type="match status" value="2"/>
</dbReference>
<dbReference type="PROSITE" id="PS51413">
    <property type="entry name" value="DBINO"/>
    <property type="match status" value="1"/>
</dbReference>
<dbReference type="PROSITE" id="PS51192">
    <property type="entry name" value="HELICASE_ATP_BIND_1"/>
    <property type="match status" value="1"/>
</dbReference>
<dbReference type="PROSITE" id="PS51194">
    <property type="entry name" value="HELICASE_CTER"/>
    <property type="match status" value="1"/>
</dbReference>
<accession>Q872I5</accession>
<accession>Q7S251</accession>
<accession>V5ILU4</accession>
<comment type="function">
    <text evidence="6">ATPase component of the INO80 complex which remodels chromatin by shifting nucleosomes and is involved in DNA repair.</text>
</comment>
<comment type="catalytic activity">
    <reaction evidence="1">
        <text>ATP + H2O = ADP + phosphate + H(+)</text>
        <dbReference type="Rhea" id="RHEA:13065"/>
        <dbReference type="ChEBI" id="CHEBI:15377"/>
        <dbReference type="ChEBI" id="CHEBI:15378"/>
        <dbReference type="ChEBI" id="CHEBI:30616"/>
        <dbReference type="ChEBI" id="CHEBI:43474"/>
        <dbReference type="ChEBI" id="CHEBI:456216"/>
    </reaction>
</comment>
<comment type="subunit">
    <text evidence="6">Component of the INO80 chromatin-remodeling complex.</text>
</comment>
<comment type="subcellular location">
    <subcellularLocation>
        <location evidence="6">Nucleus</location>
    </subcellularLocation>
</comment>
<comment type="domain">
    <text evidence="2">The DBINO region is involved in binding to DNA.</text>
</comment>
<comment type="similarity">
    <text evidence="8">Belongs to the SNF2/RAD54 helicase family.</text>
</comment>
<comment type="sequence caution" evidence="8">
    <conflict type="erroneous gene model prediction">
        <sequence resource="EMBL-CDS" id="CAD70746"/>
    </conflict>
</comment>
<proteinExistence type="inferred from homology"/>
<feature type="chain" id="PRO_0000074327" description="Chromatin-remodeling ATPase INO80">
    <location>
        <begin position="1"/>
        <end position="1997"/>
    </location>
</feature>
<feature type="domain" description="DBINO" evidence="6">
    <location>
        <begin position="881"/>
        <end position="1006"/>
    </location>
</feature>
<feature type="domain" description="Helicase ATP-binding" evidence="4">
    <location>
        <begin position="1130"/>
        <end position="1302"/>
    </location>
</feature>
<feature type="domain" description="Helicase C-terminal" evidence="5">
    <location>
        <begin position="1702"/>
        <end position="1858"/>
    </location>
</feature>
<feature type="region of interest" description="Disordered" evidence="7">
    <location>
        <begin position="1"/>
        <end position="378"/>
    </location>
</feature>
<feature type="region of interest" description="Disordered" evidence="7">
    <location>
        <begin position="397"/>
        <end position="579"/>
    </location>
</feature>
<feature type="region of interest" description="Disordered" evidence="7">
    <location>
        <begin position="674"/>
        <end position="858"/>
    </location>
</feature>
<feature type="region of interest" description="Disordered" evidence="7">
    <location>
        <begin position="1891"/>
        <end position="1986"/>
    </location>
</feature>
<feature type="coiled-coil region" evidence="3">
    <location>
        <begin position="666"/>
        <end position="735"/>
    </location>
</feature>
<feature type="short sequence motif" description="DEAQ box">
    <location>
        <begin position="1253"/>
        <end position="1256"/>
    </location>
</feature>
<feature type="compositionally biased region" description="Basic and acidic residues" evidence="7">
    <location>
        <begin position="12"/>
        <end position="25"/>
    </location>
</feature>
<feature type="compositionally biased region" description="Pro residues" evidence="7">
    <location>
        <begin position="32"/>
        <end position="41"/>
    </location>
</feature>
<feature type="compositionally biased region" description="Low complexity" evidence="7">
    <location>
        <begin position="49"/>
        <end position="64"/>
    </location>
</feature>
<feature type="compositionally biased region" description="Polar residues" evidence="7">
    <location>
        <begin position="89"/>
        <end position="107"/>
    </location>
</feature>
<feature type="compositionally biased region" description="Basic and acidic residues" evidence="7">
    <location>
        <begin position="108"/>
        <end position="117"/>
    </location>
</feature>
<feature type="compositionally biased region" description="Low complexity" evidence="7">
    <location>
        <begin position="118"/>
        <end position="156"/>
    </location>
</feature>
<feature type="compositionally biased region" description="Low complexity" evidence="7">
    <location>
        <begin position="203"/>
        <end position="230"/>
    </location>
</feature>
<feature type="compositionally biased region" description="Low complexity" evidence="7">
    <location>
        <begin position="240"/>
        <end position="251"/>
    </location>
</feature>
<feature type="compositionally biased region" description="Basic and acidic residues" evidence="7">
    <location>
        <begin position="264"/>
        <end position="276"/>
    </location>
</feature>
<feature type="compositionally biased region" description="Polar residues" evidence="7">
    <location>
        <begin position="288"/>
        <end position="297"/>
    </location>
</feature>
<feature type="compositionally biased region" description="Basic and acidic residues" evidence="7">
    <location>
        <begin position="298"/>
        <end position="317"/>
    </location>
</feature>
<feature type="compositionally biased region" description="Polar residues" evidence="7">
    <location>
        <begin position="318"/>
        <end position="340"/>
    </location>
</feature>
<feature type="compositionally biased region" description="Polar residues" evidence="7">
    <location>
        <begin position="366"/>
        <end position="378"/>
    </location>
</feature>
<feature type="compositionally biased region" description="Low complexity" evidence="7">
    <location>
        <begin position="411"/>
        <end position="420"/>
    </location>
</feature>
<feature type="compositionally biased region" description="Polar residues" evidence="7">
    <location>
        <begin position="433"/>
        <end position="442"/>
    </location>
</feature>
<feature type="compositionally biased region" description="Polar residues" evidence="7">
    <location>
        <begin position="451"/>
        <end position="465"/>
    </location>
</feature>
<feature type="compositionally biased region" description="Polar residues" evidence="7">
    <location>
        <begin position="472"/>
        <end position="481"/>
    </location>
</feature>
<feature type="compositionally biased region" description="Basic and acidic residues" evidence="7">
    <location>
        <begin position="500"/>
        <end position="519"/>
    </location>
</feature>
<feature type="compositionally biased region" description="Basic and acidic residues" evidence="7">
    <location>
        <begin position="529"/>
        <end position="540"/>
    </location>
</feature>
<feature type="compositionally biased region" description="Low complexity" evidence="7">
    <location>
        <begin position="689"/>
        <end position="707"/>
    </location>
</feature>
<feature type="compositionally biased region" description="Basic and acidic residues" evidence="7">
    <location>
        <begin position="709"/>
        <end position="723"/>
    </location>
</feature>
<feature type="compositionally biased region" description="Basic residues" evidence="7">
    <location>
        <begin position="769"/>
        <end position="781"/>
    </location>
</feature>
<feature type="compositionally biased region" description="Basic and acidic residues" evidence="7">
    <location>
        <begin position="782"/>
        <end position="793"/>
    </location>
</feature>
<feature type="compositionally biased region" description="Low complexity" evidence="7">
    <location>
        <begin position="794"/>
        <end position="806"/>
    </location>
</feature>
<feature type="compositionally biased region" description="Basic and acidic residues" evidence="7">
    <location>
        <begin position="824"/>
        <end position="858"/>
    </location>
</feature>
<feature type="compositionally biased region" description="Basic and acidic residues" evidence="7">
    <location>
        <begin position="1891"/>
        <end position="1902"/>
    </location>
</feature>
<feature type="compositionally biased region" description="Basic residues" evidence="7">
    <location>
        <begin position="1903"/>
        <end position="1914"/>
    </location>
</feature>
<feature type="compositionally biased region" description="Basic and acidic residues" evidence="7">
    <location>
        <begin position="1919"/>
        <end position="1933"/>
    </location>
</feature>
<feature type="compositionally biased region" description="Gly residues" evidence="7">
    <location>
        <begin position="1954"/>
        <end position="1967"/>
    </location>
</feature>
<feature type="compositionally biased region" description="Basic residues" evidence="7">
    <location>
        <begin position="1970"/>
        <end position="1985"/>
    </location>
</feature>
<feature type="binding site" evidence="4">
    <location>
        <begin position="1143"/>
        <end position="1150"/>
    </location>
    <ligand>
        <name>ATP</name>
        <dbReference type="ChEBI" id="CHEBI:30616"/>
    </ligand>
</feature>
<name>INO80_NEUCR</name>
<protein>
    <recommendedName>
        <fullName evidence="1">Chromatin-remodeling ATPase INO80</fullName>
        <ecNumber evidence="1">3.6.4.-</ecNumber>
    </recommendedName>
    <alternativeName>
        <fullName>Chromatin remodeling factor 2-1</fullName>
    </alternativeName>
</protein>
<keyword id="KW-0010">Activator</keyword>
<keyword id="KW-0067">ATP-binding</keyword>
<keyword id="KW-0175">Coiled coil</keyword>
<keyword id="KW-0227">DNA damage</keyword>
<keyword id="KW-0234">DNA repair</keyword>
<keyword id="KW-0238">DNA-binding</keyword>
<keyword id="KW-0378">Hydrolase</keyword>
<keyword id="KW-0547">Nucleotide-binding</keyword>
<keyword id="KW-0539">Nucleus</keyword>
<keyword id="KW-1185">Reference proteome</keyword>
<keyword id="KW-0804">Transcription</keyword>
<keyword id="KW-0805">Transcription regulation</keyword>
<gene>
    <name type="primary">crf2-1</name>
    <name type="synonym">ino80</name>
    <name type="ORF">B24G20.040</name>
    <name type="ORF">NCU08919</name>
</gene>
<sequence length="1997" mass="223073">MDHFSTVLQRPPHFDEDGTEGRGDRGNGAGPGPAPPPPPPRGGLRDILNPVSSNSAVQSQAAAAAPPPPPAVASSSLHGIAASVPPPSSTNSMRATPHSSSSFNLRSPTREPSEYRHPLSSLATPAPFAASPPTSIANANNTNNNNALGAAGSLSSQPPPPPPTGPRSILNPPTPSQQHQQQHHHPNPFVAASAPSLPPPPSSLQAPPAITPIAGLSAPAPASGSLPLSAGGIGNSITVSSSSQPPARASQLHAPSAYYSPAESFRDRDSSVREKSSTGGSFYDPTAEASNGISGSSPRKDRDRDRDHRGTTRESQRRSVSGHSDTGSSWRNATQTSASNKTRDPYNYSPSSADYYNTRKKENYPVDNTTSSSIAAPSNFTVATRSPVAALSHPASIAAPASVGSLTGSISPRLSLRPPSMASPTIRSAVLANPTNGTTSTALPALGRNDSPPSKMSPGTSTNPSRAAGVMSFSNILSSSEPVPRPRATSPNNPDDDDDVPMKVERADSSEKVVKEKKERKPRQPKQPRISDIRHSESTPKGRRGSTKQESPLPNIRIPAKRMANGAPKQQKTFSAENEEKIRKAMDRIETRELPHEDEFEEELRLWRERREYKRQQMNQRDLRQRRQRRADYTEVEAQKLKLHADFGKRRYDDLNYDDALQEVRERELFAEKERKKDMQRKRRREKSMATTMEAKAAALARASAAQDEAERQKYMREAERANKKVQQTRLILQKGIKGPSRNTGPIEPNLEGGTMATFQAENMEPGKTKGKGRAGARPKKSKEQKQAEKDAAEAAQAALDAGLELPPKEETNKIRIKLTKTKAPKEADVDKDKENKEPQEPKEPKEPKEKVIKEKVVEEPKDPLELKFQSKGFNQIYDQIWRDLARKDVNKVFRLAIDSYSTKSSNLKKTAILASKEAKRWQLRTNKGTKDLQARAKRVMRDMMGFWKRNEREERDLRKAAEKQELENARKEEADREAARQKRKLNFLISQTELYSHFIGKKIKTNEVERSTDHPDEIAAEKDKIPENEMDIEVPTGPIGAKVTNFENLDFDAEDESTLRAAAMANAQNAIAEAQKKAREFNKEESKLDEDGEMNFQNPTMMGDVEIEQPKLLNCQLKEYQLKGLNWLVNLYEQGINGILADEMGLGKTVQSISVMAYLAEKYDIWGPFLVVAPASTLHNWQQEITKFVPQFKVLPYWGTAGDRKVLRKFWDRKHTTYKKDAPFHVMITSYQLVVSDVAYFQKMKWQYMILDEAQAIKSSQSSRWKCLLGFHCRNRLLLTGTPIQNNMQELWALLHFIMPSLFDSHDEFSEWFSKDIESHAQSNTKLNEDQLKRLHMILKPFMLRRVKKHVQKELGDKIEMDVFCDLTYRQRAMYANLRNQISIMDLIEKATLGDDDSASLMNLVMQFRKVCNHPDLFERADTASPYSFGHFAETASFIREGSQVTVGYSTRSLIQYELPRLLWRDGGRLHKAGEDNQVAGWRNQWLNEKFNIWTPEHIRESLAGTDNFSWLRFADTSYEEAYRASHKDLFARAVEMSTKKNRLAEIKIAYDEPEDLNFTPAHALFHIREREDRRPLAEITEQGILGSLMNVSRSAFSETGLGRLEQAAAPKASAPPIEVVCDSRSAVVERENIMFNAPMRKVLFGPTLAEEKALVVQKVPPSRYPPPALLPAPDKEKQKFTNITVPSMRRFVTDSGKLAKLDELLRELKENGHRVLLYFQMTRMIDLMEEYLTYRNYKYCRLDGSTKLEDRRDTVADFQTRPEIFIFLLSTRAGGLGINLTSADTVIFYDSDWNPTIDSQAMDRAHRLGQTKQVTVYRLITRGTIEERIRKRAMQKEEVQRVVITGGSSAAGGGVDFSGRRAPENRNRDIAMWLADDEQAEMIEKRERELLESGELDKMQKKSRGGNKRKRGGAGGEGKEVSLDEMYHEGEGNFDDGGNNIKGSGTATPNGAAGGEGGDGKGAVGGAAKKRKTGGSKKAKTTKQRLAIADGEIDI</sequence>
<organism>
    <name type="scientific">Neurospora crassa (strain ATCC 24698 / 74-OR23-1A / CBS 708.71 / DSM 1257 / FGSC 987)</name>
    <dbReference type="NCBI Taxonomy" id="367110"/>
    <lineage>
        <taxon>Eukaryota</taxon>
        <taxon>Fungi</taxon>
        <taxon>Dikarya</taxon>
        <taxon>Ascomycota</taxon>
        <taxon>Pezizomycotina</taxon>
        <taxon>Sordariomycetes</taxon>
        <taxon>Sordariomycetidae</taxon>
        <taxon>Sordariales</taxon>
        <taxon>Sordariaceae</taxon>
        <taxon>Neurospora</taxon>
    </lineage>
</organism>